<name>TM40L_MOUSE</name>
<evidence type="ECO:0000250" key="1"/>
<evidence type="ECO:0000256" key="2">
    <source>
        <dbReference type="SAM" id="MobiDB-lite"/>
    </source>
</evidence>
<evidence type="ECO:0000305" key="3"/>
<reference key="1">
    <citation type="journal article" date="2005" name="Science">
        <title>The transcriptional landscape of the mammalian genome.</title>
        <authorList>
            <person name="Carninci P."/>
            <person name="Kasukawa T."/>
            <person name="Katayama S."/>
            <person name="Gough J."/>
            <person name="Frith M.C."/>
            <person name="Maeda N."/>
            <person name="Oyama R."/>
            <person name="Ravasi T."/>
            <person name="Lenhard B."/>
            <person name="Wells C."/>
            <person name="Kodzius R."/>
            <person name="Shimokawa K."/>
            <person name="Bajic V.B."/>
            <person name="Brenner S.E."/>
            <person name="Batalov S."/>
            <person name="Forrest A.R."/>
            <person name="Zavolan M."/>
            <person name="Davis M.J."/>
            <person name="Wilming L.G."/>
            <person name="Aidinis V."/>
            <person name="Allen J.E."/>
            <person name="Ambesi-Impiombato A."/>
            <person name="Apweiler R."/>
            <person name="Aturaliya R.N."/>
            <person name="Bailey T.L."/>
            <person name="Bansal M."/>
            <person name="Baxter L."/>
            <person name="Beisel K.W."/>
            <person name="Bersano T."/>
            <person name="Bono H."/>
            <person name="Chalk A.M."/>
            <person name="Chiu K.P."/>
            <person name="Choudhary V."/>
            <person name="Christoffels A."/>
            <person name="Clutterbuck D.R."/>
            <person name="Crowe M.L."/>
            <person name="Dalla E."/>
            <person name="Dalrymple B.P."/>
            <person name="de Bono B."/>
            <person name="Della Gatta G."/>
            <person name="di Bernardo D."/>
            <person name="Down T."/>
            <person name="Engstrom P."/>
            <person name="Fagiolini M."/>
            <person name="Faulkner G."/>
            <person name="Fletcher C.F."/>
            <person name="Fukushima T."/>
            <person name="Furuno M."/>
            <person name="Futaki S."/>
            <person name="Gariboldi M."/>
            <person name="Georgii-Hemming P."/>
            <person name="Gingeras T.R."/>
            <person name="Gojobori T."/>
            <person name="Green R.E."/>
            <person name="Gustincich S."/>
            <person name="Harbers M."/>
            <person name="Hayashi Y."/>
            <person name="Hensch T.K."/>
            <person name="Hirokawa N."/>
            <person name="Hill D."/>
            <person name="Huminiecki L."/>
            <person name="Iacono M."/>
            <person name="Ikeo K."/>
            <person name="Iwama A."/>
            <person name="Ishikawa T."/>
            <person name="Jakt M."/>
            <person name="Kanapin A."/>
            <person name="Katoh M."/>
            <person name="Kawasawa Y."/>
            <person name="Kelso J."/>
            <person name="Kitamura H."/>
            <person name="Kitano H."/>
            <person name="Kollias G."/>
            <person name="Krishnan S.P."/>
            <person name="Kruger A."/>
            <person name="Kummerfeld S.K."/>
            <person name="Kurochkin I.V."/>
            <person name="Lareau L.F."/>
            <person name="Lazarevic D."/>
            <person name="Lipovich L."/>
            <person name="Liu J."/>
            <person name="Liuni S."/>
            <person name="McWilliam S."/>
            <person name="Madan Babu M."/>
            <person name="Madera M."/>
            <person name="Marchionni L."/>
            <person name="Matsuda H."/>
            <person name="Matsuzawa S."/>
            <person name="Miki H."/>
            <person name="Mignone F."/>
            <person name="Miyake S."/>
            <person name="Morris K."/>
            <person name="Mottagui-Tabar S."/>
            <person name="Mulder N."/>
            <person name="Nakano N."/>
            <person name="Nakauchi H."/>
            <person name="Ng P."/>
            <person name="Nilsson R."/>
            <person name="Nishiguchi S."/>
            <person name="Nishikawa S."/>
            <person name="Nori F."/>
            <person name="Ohara O."/>
            <person name="Okazaki Y."/>
            <person name="Orlando V."/>
            <person name="Pang K.C."/>
            <person name="Pavan W.J."/>
            <person name="Pavesi G."/>
            <person name="Pesole G."/>
            <person name="Petrovsky N."/>
            <person name="Piazza S."/>
            <person name="Reed J."/>
            <person name="Reid J.F."/>
            <person name="Ring B.Z."/>
            <person name="Ringwald M."/>
            <person name="Rost B."/>
            <person name="Ruan Y."/>
            <person name="Salzberg S.L."/>
            <person name="Sandelin A."/>
            <person name="Schneider C."/>
            <person name="Schoenbach C."/>
            <person name="Sekiguchi K."/>
            <person name="Semple C.A."/>
            <person name="Seno S."/>
            <person name="Sessa L."/>
            <person name="Sheng Y."/>
            <person name="Shibata Y."/>
            <person name="Shimada H."/>
            <person name="Shimada K."/>
            <person name="Silva D."/>
            <person name="Sinclair B."/>
            <person name="Sperling S."/>
            <person name="Stupka E."/>
            <person name="Sugiura K."/>
            <person name="Sultana R."/>
            <person name="Takenaka Y."/>
            <person name="Taki K."/>
            <person name="Tammoja K."/>
            <person name="Tan S.L."/>
            <person name="Tang S."/>
            <person name="Taylor M.S."/>
            <person name="Tegner J."/>
            <person name="Teichmann S.A."/>
            <person name="Ueda H.R."/>
            <person name="van Nimwegen E."/>
            <person name="Verardo R."/>
            <person name="Wei C.L."/>
            <person name="Yagi K."/>
            <person name="Yamanishi H."/>
            <person name="Zabarovsky E."/>
            <person name="Zhu S."/>
            <person name="Zimmer A."/>
            <person name="Hide W."/>
            <person name="Bult C."/>
            <person name="Grimmond S.M."/>
            <person name="Teasdale R.D."/>
            <person name="Liu E.T."/>
            <person name="Brusic V."/>
            <person name="Quackenbush J."/>
            <person name="Wahlestedt C."/>
            <person name="Mattick J.S."/>
            <person name="Hume D.A."/>
            <person name="Kai C."/>
            <person name="Sasaki D."/>
            <person name="Tomaru Y."/>
            <person name="Fukuda S."/>
            <person name="Kanamori-Katayama M."/>
            <person name="Suzuki M."/>
            <person name="Aoki J."/>
            <person name="Arakawa T."/>
            <person name="Iida J."/>
            <person name="Imamura K."/>
            <person name="Itoh M."/>
            <person name="Kato T."/>
            <person name="Kawaji H."/>
            <person name="Kawagashira N."/>
            <person name="Kawashima T."/>
            <person name="Kojima M."/>
            <person name="Kondo S."/>
            <person name="Konno H."/>
            <person name="Nakano K."/>
            <person name="Ninomiya N."/>
            <person name="Nishio T."/>
            <person name="Okada M."/>
            <person name="Plessy C."/>
            <person name="Shibata K."/>
            <person name="Shiraki T."/>
            <person name="Suzuki S."/>
            <person name="Tagami M."/>
            <person name="Waki K."/>
            <person name="Watahiki A."/>
            <person name="Okamura-Oho Y."/>
            <person name="Suzuki H."/>
            <person name="Kawai J."/>
            <person name="Hayashizaki Y."/>
        </authorList>
    </citation>
    <scope>NUCLEOTIDE SEQUENCE [LARGE SCALE MRNA]</scope>
    <source>
        <strain>C57BL/6J</strain>
        <tissue>Placenta</tissue>
    </source>
</reference>
<reference key="2">
    <citation type="journal article" date="2004" name="Genome Res.">
        <title>The status, quality, and expansion of the NIH full-length cDNA project: the Mammalian Gene Collection (MGC).</title>
        <authorList>
            <consortium name="The MGC Project Team"/>
        </authorList>
    </citation>
    <scope>NUCLEOTIDE SEQUENCE [LARGE SCALE MRNA]</scope>
    <source>
        <strain>C57BL/6J</strain>
    </source>
</reference>
<reference key="3">
    <citation type="journal article" date="2010" name="Cell">
        <title>A tissue-specific atlas of mouse protein phosphorylation and expression.</title>
        <authorList>
            <person name="Huttlin E.L."/>
            <person name="Jedrychowski M.P."/>
            <person name="Elias J.E."/>
            <person name="Goswami T."/>
            <person name="Rad R."/>
            <person name="Beausoleil S.A."/>
            <person name="Villen J."/>
            <person name="Haas W."/>
            <person name="Sowa M.E."/>
            <person name="Gygi S.P."/>
        </authorList>
    </citation>
    <scope>IDENTIFICATION BY MASS SPECTROMETRY [LARGE SCALE ANALYSIS]</scope>
    <source>
        <tissue>Heart</tissue>
    </source>
</reference>
<feature type="chain" id="PRO_0000051537" description="Mitochondrial import receptor subunit TOM40B">
    <location>
        <begin position="1"/>
        <end position="308"/>
    </location>
</feature>
<feature type="region of interest" description="Disordered" evidence="2">
    <location>
        <begin position="1"/>
        <end position="29"/>
    </location>
</feature>
<feature type="region of interest" description="Required for mitochondrial targeting" evidence="1">
    <location>
        <begin position="281"/>
        <end position="308"/>
    </location>
</feature>
<keyword id="KW-0406">Ion transport</keyword>
<keyword id="KW-0472">Membrane</keyword>
<keyword id="KW-0496">Mitochondrion</keyword>
<keyword id="KW-1000">Mitochondrion outer membrane</keyword>
<keyword id="KW-0626">Porin</keyword>
<keyword id="KW-0653">Protein transport</keyword>
<keyword id="KW-1185">Reference proteome</keyword>
<keyword id="KW-0812">Transmembrane</keyword>
<keyword id="KW-1134">Transmembrane beta strand</keyword>
<keyword id="KW-0813">Transport</keyword>
<organism>
    <name type="scientific">Mus musculus</name>
    <name type="common">Mouse</name>
    <dbReference type="NCBI Taxonomy" id="10090"/>
    <lineage>
        <taxon>Eukaryota</taxon>
        <taxon>Metazoa</taxon>
        <taxon>Chordata</taxon>
        <taxon>Craniata</taxon>
        <taxon>Vertebrata</taxon>
        <taxon>Euteleostomi</taxon>
        <taxon>Mammalia</taxon>
        <taxon>Eutheria</taxon>
        <taxon>Euarchontoglires</taxon>
        <taxon>Glires</taxon>
        <taxon>Rodentia</taxon>
        <taxon>Myomorpha</taxon>
        <taxon>Muroidea</taxon>
        <taxon>Muridae</taxon>
        <taxon>Murinae</taxon>
        <taxon>Mus</taxon>
        <taxon>Mus</taxon>
    </lineage>
</organism>
<protein>
    <recommendedName>
        <fullName>Mitochondrial import receptor subunit TOM40B</fullName>
    </recommendedName>
    <alternativeName>
        <fullName>Protein TOMM40-like</fullName>
    </alternativeName>
</protein>
<gene>
    <name type="primary">Tomm40l</name>
    <name type="synonym">Tomm40b</name>
</gene>
<sequence length="308" mass="34005">MGNTLGLAPMGTLPRRSHRREEPLPNPGSFDELHRLCKDVFPAQMEGVKLVVNKVLSSHFQVAHTVHMSALGLPGYHLHTAYAGDWQLSPTEVFPTVVGDMDSSGSLNAQVLLLLAERLRAKAVFQTQQAKFLTWQFDGEYRGDDYTATLTLGNPDLIGESVIMVAHFLQSITHRLVLGGELVYHRRPGEEGAILTLAGKYSAVHWVATLNVGSGGAHASYYHKANEQVQVGVEFEANTRLQDTTFSFGYHLTLPQADMVFRGLVDSNWCVGAVLEKKMRPLPVTLALGAFLNHWRNRFHCGFSITVG</sequence>
<proteinExistence type="evidence at protein level"/>
<accession>Q9CZR3</accession>
<dbReference type="EMBL" id="AK012264">
    <property type="protein sequence ID" value="BAB28127.1"/>
    <property type="molecule type" value="mRNA"/>
</dbReference>
<dbReference type="EMBL" id="AK028388">
    <property type="protein sequence ID" value="BAC25924.1"/>
    <property type="molecule type" value="mRNA"/>
</dbReference>
<dbReference type="EMBL" id="BC058978">
    <property type="protein sequence ID" value="AAH58978.1"/>
    <property type="molecule type" value="mRNA"/>
</dbReference>
<dbReference type="CCDS" id="CCDS15481.1"/>
<dbReference type="RefSeq" id="NP_001032247.1">
    <property type="nucleotide sequence ID" value="NM_001037170.3"/>
</dbReference>
<dbReference type="RefSeq" id="NP_001399675.1">
    <property type="nucleotide sequence ID" value="NM_001412746.1"/>
</dbReference>
<dbReference type="RefSeq" id="XP_006497016.1">
    <property type="nucleotide sequence ID" value="XM_006496953.3"/>
</dbReference>
<dbReference type="SMR" id="Q9CZR3"/>
<dbReference type="FunCoup" id="Q9CZR3">
    <property type="interactions" value="922"/>
</dbReference>
<dbReference type="STRING" id="10090.ENSMUSP00000005817"/>
<dbReference type="iPTMnet" id="Q9CZR3"/>
<dbReference type="PhosphoSitePlus" id="Q9CZR3"/>
<dbReference type="SwissPalm" id="Q9CZR3"/>
<dbReference type="PaxDb" id="10090-ENSMUSP00000005817"/>
<dbReference type="ProteomicsDB" id="260700"/>
<dbReference type="Pumba" id="Q9CZR3"/>
<dbReference type="Antibodypedia" id="34305">
    <property type="antibodies" value="98 antibodies from 18 providers"/>
</dbReference>
<dbReference type="Ensembl" id="ENSMUST00000005817.9">
    <property type="protein sequence ID" value="ENSMUSP00000005817.3"/>
    <property type="gene ID" value="ENSMUSG00000005674.10"/>
</dbReference>
<dbReference type="Ensembl" id="ENSMUST00000111327.8">
    <property type="protein sequence ID" value="ENSMUSP00000106959.2"/>
    <property type="gene ID" value="ENSMUSG00000005674.10"/>
</dbReference>
<dbReference type="GeneID" id="641376"/>
<dbReference type="KEGG" id="mmu:641376"/>
<dbReference type="UCSC" id="uc007dni.1">
    <property type="organism name" value="mouse"/>
</dbReference>
<dbReference type="AGR" id="MGI:3589112"/>
<dbReference type="CTD" id="84134"/>
<dbReference type="MGI" id="MGI:3589112">
    <property type="gene designation" value="Tomm40l"/>
</dbReference>
<dbReference type="VEuPathDB" id="HostDB:ENSMUSG00000005674"/>
<dbReference type="eggNOG" id="KOG3296">
    <property type="taxonomic scope" value="Eukaryota"/>
</dbReference>
<dbReference type="GeneTree" id="ENSGT00390000003308"/>
<dbReference type="InParanoid" id="Q9CZR3"/>
<dbReference type="OMA" id="WTEMGNT"/>
<dbReference type="OrthoDB" id="19656at2759"/>
<dbReference type="PhylomeDB" id="Q9CZR3"/>
<dbReference type="TreeFam" id="TF106204"/>
<dbReference type="BioGRID-ORCS" id="641376">
    <property type="hits" value="5 hits in 77 CRISPR screens"/>
</dbReference>
<dbReference type="ChiTaRS" id="Tomm40l">
    <property type="organism name" value="mouse"/>
</dbReference>
<dbReference type="PRO" id="PR:Q9CZR3"/>
<dbReference type="Proteomes" id="UP000000589">
    <property type="component" value="Chromosome 1"/>
</dbReference>
<dbReference type="RNAct" id="Q9CZR3">
    <property type="molecule type" value="protein"/>
</dbReference>
<dbReference type="Bgee" id="ENSMUSG00000005674">
    <property type="expression patterns" value="Expressed in interventricular septum and 249 other cell types or tissues"/>
</dbReference>
<dbReference type="ExpressionAtlas" id="Q9CZR3">
    <property type="expression patterns" value="baseline and differential"/>
</dbReference>
<dbReference type="GO" id="GO:0005741">
    <property type="term" value="C:mitochondrial outer membrane"/>
    <property type="evidence" value="ECO:0007669"/>
    <property type="project" value="UniProtKB-SubCell"/>
</dbReference>
<dbReference type="GO" id="GO:0005739">
    <property type="term" value="C:mitochondrion"/>
    <property type="evidence" value="ECO:0007005"/>
    <property type="project" value="MGI"/>
</dbReference>
<dbReference type="GO" id="GO:0046930">
    <property type="term" value="C:pore complex"/>
    <property type="evidence" value="ECO:0007669"/>
    <property type="project" value="UniProtKB-KW"/>
</dbReference>
<dbReference type="GO" id="GO:0015288">
    <property type="term" value="F:porin activity"/>
    <property type="evidence" value="ECO:0007669"/>
    <property type="project" value="UniProtKB-KW"/>
</dbReference>
<dbReference type="GO" id="GO:0008320">
    <property type="term" value="F:protein transmembrane transporter activity"/>
    <property type="evidence" value="ECO:0007669"/>
    <property type="project" value="InterPro"/>
</dbReference>
<dbReference type="GO" id="GO:0006811">
    <property type="term" value="P:monoatomic ion transport"/>
    <property type="evidence" value="ECO:0007669"/>
    <property type="project" value="UniProtKB-KW"/>
</dbReference>
<dbReference type="GO" id="GO:0030150">
    <property type="term" value="P:protein import into mitochondrial matrix"/>
    <property type="evidence" value="ECO:0007669"/>
    <property type="project" value="InterPro"/>
</dbReference>
<dbReference type="CDD" id="cd07305">
    <property type="entry name" value="Porin3_Tom40"/>
    <property type="match status" value="1"/>
</dbReference>
<dbReference type="FunFam" id="2.40.160.10:FF:000005">
    <property type="entry name" value="mitochondrial import receptor subunit TOM40 homolog"/>
    <property type="match status" value="1"/>
</dbReference>
<dbReference type="Gene3D" id="2.40.160.10">
    <property type="entry name" value="Porin"/>
    <property type="match status" value="1"/>
</dbReference>
<dbReference type="InterPro" id="IPR023614">
    <property type="entry name" value="Porin_dom_sf"/>
</dbReference>
<dbReference type="InterPro" id="IPR027246">
    <property type="entry name" value="Porin_Euk/Tom40"/>
</dbReference>
<dbReference type="InterPro" id="IPR037930">
    <property type="entry name" value="Tom40"/>
</dbReference>
<dbReference type="PANTHER" id="PTHR10802">
    <property type="entry name" value="MITOCHONDRIAL IMPORT RECEPTOR SUBUNIT TOM40"/>
    <property type="match status" value="1"/>
</dbReference>
<dbReference type="Pfam" id="PF01459">
    <property type="entry name" value="Porin_3"/>
    <property type="match status" value="1"/>
</dbReference>
<comment type="function">
    <text evidence="1">Potential channel-forming protein implicated in import of protein precursors into mitochondria.</text>
</comment>
<comment type="subunit">
    <text evidence="1">Forms part of the preprotein translocase of the outer mitochondrial membrane (TOM complex) containing TOMM22, TOMM40, TOMM40L and TOMM70. Interacts with mitochondrial targeting sequences (By similarity).</text>
</comment>
<comment type="subcellular location">
    <subcellularLocation>
        <location evidence="1">Mitochondrion outer membrane</location>
        <topology evidence="1">Multi-pass membrane protein</topology>
    </subcellularLocation>
</comment>
<comment type="similarity">
    <text evidence="3">Belongs to the Tom40 family.</text>
</comment>